<proteinExistence type="inferred from homology"/>
<reference key="1">
    <citation type="journal article" date="2024" name="J. Am. Chem. Soc.">
        <title>Two cytochrome P450 enzymes form the tricyclic nested skeleton of meroterpenoids by sequential oxidative reactions.</title>
        <authorList>
            <person name="Yang E."/>
            <person name="Yao Y."/>
            <person name="Su H."/>
            <person name="Sun Z."/>
            <person name="Gao S.S."/>
            <person name="Sureram S."/>
            <person name="Kittakoop P."/>
            <person name="Fan K."/>
            <person name="Pan Y."/>
            <person name="Xu X."/>
            <person name="Sun Z.H."/>
            <person name="Ma G."/>
            <person name="Liu G."/>
        </authorList>
    </citation>
    <scope>NUCLEOTIDE SEQUENCE [GENOMIC DNA]</scope>
    <scope>FUNCTION</scope>
    <scope>PATHWAY</scope>
</reference>
<keyword id="KW-0349">Heme</keyword>
<keyword id="KW-0408">Iron</keyword>
<keyword id="KW-0472">Membrane</keyword>
<keyword id="KW-0479">Metal-binding</keyword>
<keyword id="KW-0503">Monooxygenase</keyword>
<keyword id="KW-0560">Oxidoreductase</keyword>
<keyword id="KW-0812">Transmembrane</keyword>
<keyword id="KW-1133">Transmembrane helix</keyword>
<feature type="chain" id="PRO_0000461438" description="Cytochrome P450 monooxygenase claU">
    <location>
        <begin position="1"/>
        <end position="541"/>
    </location>
</feature>
<feature type="transmembrane region" description="Helical" evidence="2">
    <location>
        <begin position="12"/>
        <end position="32"/>
    </location>
</feature>
<feature type="binding site" description="axial binding residue" evidence="1">
    <location>
        <position position="480"/>
    </location>
    <ligand>
        <name>heme</name>
        <dbReference type="ChEBI" id="CHEBI:30413"/>
    </ligand>
    <ligandPart>
        <name>Fe</name>
        <dbReference type="ChEBI" id="CHEBI:18248"/>
    </ligandPart>
</feature>
<gene>
    <name evidence="4" type="primary">claU</name>
</gene>
<evidence type="ECO:0000250" key="1">
    <source>
        <dbReference type="UniProtKB" id="P04798"/>
    </source>
</evidence>
<evidence type="ECO:0000255" key="2"/>
<evidence type="ECO:0000269" key="3">
    <source>
    </source>
</evidence>
<evidence type="ECO:0000303" key="4">
    <source>
    </source>
</evidence>
<evidence type="ECO:0000305" key="5"/>
<evidence type="ECO:0000305" key="6">
    <source>
    </source>
</evidence>
<sequence>MAIMPYIRQGTVIDTLVILFSTWAFLGLIRVIRRRSNTTSLKGPPSESFIFGLHQIIHKSEDSDALYEQWAAEYGSVYQLSGPMGTKRVVLCDPKAILHLYSKDTFGFVQIGIIRAFHEKYFGRGIIWAEGESHRRQRKALTPAFSNVAIRNITPVFFDSAYKTKAAWDTIFESNPTKDGIIIEVQTWMNHISLDSIGIAGFSHDFGSIQGKPSAVLDVFDSFSSVQPDAMSTLMFTLAATFPIMLKLPNNRHALFAKLHQTILEISDELLESTRKEEEGKAGGGRGDAKSIIGSLIKAESANSHLRISQEEVIAQMNVLLLAGYETTSVSLTWALIELSRHPDVQQKLRDELSRFAATDPTWEELTNGLPYLDAVVHEILRLHAPLNETTRVVADDDVIPLGTPLQTASGNIVDRISVGKGTTVSIPTRCMNRLTGLWGDNAKEFVPDRWLNDAKDQLKSNEIQGYRHLLTFIDGPRTCLGKGFAVAEFKAVLSVLIRHYTFEFPDGPETKVVGYMSIVERPRVEGQDGAKVPLLVRRVE</sequence>
<dbReference type="EC" id="1.-.-.-" evidence="6"/>
<dbReference type="EMBL" id="PP505398">
    <property type="protein sequence ID" value="WYC13324.1"/>
    <property type="molecule type" value="Genomic_DNA"/>
</dbReference>
<dbReference type="SMR" id="P9WEI4"/>
<dbReference type="UniPathway" id="UPA00213"/>
<dbReference type="GO" id="GO:0016020">
    <property type="term" value="C:membrane"/>
    <property type="evidence" value="ECO:0007669"/>
    <property type="project" value="UniProtKB-SubCell"/>
</dbReference>
<dbReference type="GO" id="GO:0020037">
    <property type="term" value="F:heme binding"/>
    <property type="evidence" value="ECO:0007669"/>
    <property type="project" value="InterPro"/>
</dbReference>
<dbReference type="GO" id="GO:0005506">
    <property type="term" value="F:iron ion binding"/>
    <property type="evidence" value="ECO:0007669"/>
    <property type="project" value="InterPro"/>
</dbReference>
<dbReference type="GO" id="GO:0004497">
    <property type="term" value="F:monooxygenase activity"/>
    <property type="evidence" value="ECO:0007669"/>
    <property type="project" value="UniProtKB-KW"/>
</dbReference>
<dbReference type="GO" id="GO:0016705">
    <property type="term" value="F:oxidoreductase activity, acting on paired donors, with incorporation or reduction of molecular oxygen"/>
    <property type="evidence" value="ECO:0007669"/>
    <property type="project" value="InterPro"/>
</dbReference>
<dbReference type="Gene3D" id="1.10.630.10">
    <property type="entry name" value="Cytochrome P450"/>
    <property type="match status" value="1"/>
</dbReference>
<dbReference type="InterPro" id="IPR001128">
    <property type="entry name" value="Cyt_P450"/>
</dbReference>
<dbReference type="InterPro" id="IPR002401">
    <property type="entry name" value="Cyt_P450_E_grp-I"/>
</dbReference>
<dbReference type="InterPro" id="IPR036396">
    <property type="entry name" value="Cyt_P450_sf"/>
</dbReference>
<dbReference type="InterPro" id="IPR050121">
    <property type="entry name" value="Cytochrome_P450_monoxygenase"/>
</dbReference>
<dbReference type="PANTHER" id="PTHR24305">
    <property type="entry name" value="CYTOCHROME P450"/>
    <property type="match status" value="1"/>
</dbReference>
<dbReference type="PANTHER" id="PTHR24305:SF166">
    <property type="entry name" value="CYTOCHROME P450 12A4, MITOCHONDRIAL-RELATED"/>
    <property type="match status" value="1"/>
</dbReference>
<dbReference type="Pfam" id="PF00067">
    <property type="entry name" value="p450"/>
    <property type="match status" value="1"/>
</dbReference>
<dbReference type="PRINTS" id="PR00463">
    <property type="entry name" value="EP450I"/>
</dbReference>
<dbReference type="PRINTS" id="PR00385">
    <property type="entry name" value="P450"/>
</dbReference>
<dbReference type="SUPFAM" id="SSF48264">
    <property type="entry name" value="Cytochrome P450"/>
    <property type="match status" value="1"/>
</dbReference>
<comment type="function">
    <text evidence="3">Cytochrome P450 monooxygenase; part of the gene cluster that mediates the biosynthesis of clavilactone A, a meroterpenoid that features a unique benzo-fused ten-membered carbocyclic ring unit with an alpha,beta-epoxy-gamma-lactone moiety, forming an intriguing 10/5/3 tricyclic nested skeleton (PubMed:38602511). Cytochrome P450 monooxygenases claO, claP, claQ, claU, and claW are close orthologs, suggesting that a redundant function or pseudogenes are present in the cla cluster. These monoxygenases are not involved in clavilactone A biosynthesis nor its modification (PubMed:38602511). ClaR, ClaS and ClaT are sufficient to produce clavilactone A. The biosynthesis begins with the prenyltransferase claS that transfers geranyl pyrophosphate (GPP) to hydroquinone to produces geranylhydroquinone. The cytochrome P450 monooxygenase claR then catalyzes the diradical coupling reaction between the intramolecular hydroquinone and allyl moieties to form the benzo-fused ten-membered carbocyclic ring unit of wigantol. Finally the cytochrome P450 monooxygenase claT exquisitely and stereoselectively assembles the alpha,beta-epoxy-gamma-lactone moiety, producing clavilactone A via arnebinol A (PubMed:38602511).</text>
</comment>
<comment type="cofactor">
    <cofactor evidence="1">
        <name>heme</name>
        <dbReference type="ChEBI" id="CHEBI:30413"/>
    </cofactor>
</comment>
<comment type="pathway">
    <text evidence="6">Secondary metabolite biosynthesis; terpenoid biosynthesis.</text>
</comment>
<comment type="subcellular location">
    <subcellularLocation>
        <location evidence="2">Membrane</location>
        <topology evidence="2">Single-pass membrane protein</topology>
    </subcellularLocation>
</comment>
<comment type="similarity">
    <text evidence="5">Belongs to the cytochrome P450 family.</text>
</comment>
<protein>
    <recommendedName>
        <fullName evidence="4">Cytochrome P450 monooxygenase claU</fullName>
        <ecNumber evidence="6">1.-.-.-</ecNumber>
    </recommendedName>
    <alternativeName>
        <fullName evidence="4">Clavilactone A biosynthesis cluster protein U</fullName>
    </alternativeName>
</protein>
<accession>P9WEI4</accession>
<organism>
    <name type="scientific">Ampulloclitocybe clavipes</name>
    <name type="common">Club foot</name>
    <name type="synonym">Clitocybe clavipes</name>
    <dbReference type="NCBI Taxonomy" id="56467"/>
    <lineage>
        <taxon>Eukaryota</taxon>
        <taxon>Fungi</taxon>
        <taxon>Dikarya</taxon>
        <taxon>Basidiomycota</taxon>
        <taxon>Agaricomycotina</taxon>
        <taxon>Agaricomycetes</taxon>
        <taxon>Agaricomycetidae</taxon>
        <taxon>Agaricales</taxon>
        <taxon>Hygrophoraceae</taxon>
        <taxon>Ampulloclitocybe</taxon>
    </lineage>
</organism>
<name>CLAU_AMPCV</name>